<keyword id="KW-1003">Cell membrane</keyword>
<keyword id="KW-0472">Membrane</keyword>
<keyword id="KW-1185">Reference proteome</keyword>
<keyword id="KW-0769">Symport</keyword>
<keyword id="KW-0812">Transmembrane</keyword>
<keyword id="KW-1133">Transmembrane helix</keyword>
<keyword id="KW-0813">Transport</keyword>
<proteinExistence type="inferred from homology"/>
<evidence type="ECO:0000250" key="1"/>
<evidence type="ECO:0000255" key="2"/>
<evidence type="ECO:0000256" key="3">
    <source>
        <dbReference type="SAM" id="MobiDB-lite"/>
    </source>
</evidence>
<evidence type="ECO:0000305" key="4"/>
<sequence>MARALEQADGRWAWVVLLSSLVTQALTLGFPTCIGVFFTDLQRDFQASNSETSWFPSILGAMVHGGGPLCSILVKHFGCRVTMMLGGVLASLGMVVSTFSGSLTHLFLTAGVITGLGMCFSFQSSITVVGLYFVRRRPLANALASMGLSMGVTLWPLLARYLLETLGWRGAFLIFGGILLHCCVCGALLRPVATNEVPEPKEDPLLPPKIPTRSCLATCVSTIRYHLAFDILRHNMGFCIYVTGVTWMNLGFALPHIFLVPYAMHHGVDDYWAAMLMSIVGFCNIFLRPMAGLLLAGRKSLAAYRKYLFAVAILINGLTNLICTVSADFRVLLGYCLVYSLSMCGVGILVFQVLMDIVPMDRFPSALGLFTILCGVTSLISPPLAGLLLDKTNNFSYVFYMSSGFLVSGSLILGVGFYAAEKKKLKQDGQAKMENATSEMTPMHDLTSEDKDSAKKQPYPESIYMTNV</sequence>
<name>MOT6_MOUSE</name>
<protein>
    <recommendedName>
        <fullName>Monocarboxylate transporter 6</fullName>
        <shortName>MCT 6</shortName>
    </recommendedName>
    <alternativeName>
        <fullName>Monocarboxylate transporter 5</fullName>
        <shortName>MCT 5</shortName>
    </alternativeName>
    <alternativeName>
        <fullName>Solute carrier family 16 member 5</fullName>
    </alternativeName>
</protein>
<feature type="chain" id="PRO_0000415804" description="Monocarboxylate transporter 6">
    <location>
        <begin position="1"/>
        <end position="468"/>
    </location>
</feature>
<feature type="topological domain" description="Cytoplasmic" evidence="2">
    <location>
        <begin position="1"/>
        <end position="13"/>
    </location>
</feature>
<feature type="transmembrane region" description="Helical" evidence="2">
    <location>
        <begin position="14"/>
        <end position="34"/>
    </location>
</feature>
<feature type="topological domain" description="Extracellular" evidence="2">
    <location>
        <begin position="35"/>
        <end position="53"/>
    </location>
</feature>
<feature type="transmembrane region" description="Helical" evidence="2">
    <location>
        <begin position="54"/>
        <end position="74"/>
    </location>
</feature>
<feature type="topological domain" description="Cytoplasmic" evidence="2">
    <location>
        <begin position="75"/>
        <end position="80"/>
    </location>
</feature>
<feature type="transmembrane region" description="Helical" evidence="2">
    <location>
        <begin position="81"/>
        <end position="101"/>
    </location>
</feature>
<feature type="topological domain" description="Extracellular" evidence="2">
    <location>
        <position position="102"/>
    </location>
</feature>
<feature type="transmembrane region" description="Helical" evidence="2">
    <location>
        <begin position="103"/>
        <end position="122"/>
    </location>
</feature>
<feature type="topological domain" description="Cytoplasmic" evidence="2">
    <location>
        <begin position="123"/>
        <end position="138"/>
    </location>
</feature>
<feature type="transmembrane region" description="Helical" evidence="2">
    <location>
        <begin position="139"/>
        <end position="159"/>
    </location>
</feature>
<feature type="topological domain" description="Extracellular" evidence="2">
    <location>
        <begin position="160"/>
        <end position="171"/>
    </location>
</feature>
<feature type="transmembrane region" description="Helical" evidence="2">
    <location>
        <begin position="172"/>
        <end position="192"/>
    </location>
</feature>
<feature type="topological domain" description="Cytoplasmic" evidence="2">
    <location>
        <begin position="193"/>
        <end position="239"/>
    </location>
</feature>
<feature type="transmembrane region" description="Helical" evidence="2">
    <location>
        <begin position="240"/>
        <end position="260"/>
    </location>
</feature>
<feature type="topological domain" description="Extracellular" evidence="2">
    <location>
        <begin position="261"/>
        <end position="274"/>
    </location>
</feature>
<feature type="transmembrane region" description="Helical" evidence="2">
    <location>
        <begin position="275"/>
        <end position="295"/>
    </location>
</feature>
<feature type="topological domain" description="Cytoplasmic" evidence="2">
    <location>
        <begin position="296"/>
        <end position="306"/>
    </location>
</feature>
<feature type="transmembrane region" description="Helical" evidence="2">
    <location>
        <begin position="307"/>
        <end position="327"/>
    </location>
</feature>
<feature type="topological domain" description="Extracellular" evidence="2">
    <location>
        <begin position="328"/>
        <end position="330"/>
    </location>
</feature>
<feature type="transmembrane region" description="Helical" evidence="2">
    <location>
        <begin position="331"/>
        <end position="351"/>
    </location>
</feature>
<feature type="topological domain" description="Cytoplasmic" evidence="2">
    <location>
        <begin position="352"/>
        <end position="368"/>
    </location>
</feature>
<feature type="transmembrane region" description="Helical" evidence="2">
    <location>
        <begin position="369"/>
        <end position="389"/>
    </location>
</feature>
<feature type="topological domain" description="Extracellular" evidence="2">
    <location>
        <begin position="390"/>
        <end position="396"/>
    </location>
</feature>
<feature type="transmembrane region" description="Helical" evidence="2">
    <location>
        <begin position="397"/>
        <end position="417"/>
    </location>
</feature>
<feature type="topological domain" description="Cytoplasmic" evidence="2">
    <location>
        <begin position="418"/>
        <end position="468"/>
    </location>
</feature>
<feature type="region of interest" description="Disordered" evidence="3">
    <location>
        <begin position="429"/>
        <end position="468"/>
    </location>
</feature>
<feature type="compositionally biased region" description="Basic and acidic residues" evidence="3">
    <location>
        <begin position="446"/>
        <end position="455"/>
    </location>
</feature>
<comment type="function">
    <text evidence="1">Proton-linked monocarboxylate transporter. Catalyzes the rapid transport across the plasma membrane of many monocarboxylates such as lactate, pyruvate, branched-chain oxo acids derived from leucine, valine and isoleucine, and the ketone bodies acetoacetate, beta-hydroxybutyrate and acetate (By similarity).</text>
</comment>
<comment type="subcellular location">
    <subcellularLocation>
        <location evidence="1">Cell membrane</location>
        <topology evidence="1">Multi-pass membrane protein</topology>
    </subcellularLocation>
</comment>
<comment type="similarity">
    <text evidence="4">Belongs to the major facilitator superfamily. Monocarboxylate porter (TC 2.A.1.13) family.</text>
</comment>
<comment type="sequence caution" evidence="4">
    <conflict type="erroneous gene model prediction">
        <sequence resource="EMBL-CDS" id="CAM23020"/>
    </conflict>
</comment>
<comment type="sequence caution" evidence="4">
    <conflict type="erroneous gene model prediction">
        <sequence resource="EMBL-CDS" id="CAM23021"/>
    </conflict>
</comment>
<comment type="sequence caution" evidence="4">
    <conflict type="erroneous gene model prediction">
        <sequence resource="EMBL-CDS" id="CAM23022"/>
    </conflict>
</comment>
<reference key="1">
    <citation type="journal article" date="2009" name="PLoS Biol.">
        <title>Lineage-specific biology revealed by a finished genome assembly of the mouse.</title>
        <authorList>
            <person name="Church D.M."/>
            <person name="Goodstadt L."/>
            <person name="Hillier L.W."/>
            <person name="Zody M.C."/>
            <person name="Goldstein S."/>
            <person name="She X."/>
            <person name="Bult C.J."/>
            <person name="Agarwala R."/>
            <person name="Cherry J.L."/>
            <person name="DiCuccio M."/>
            <person name="Hlavina W."/>
            <person name="Kapustin Y."/>
            <person name="Meric P."/>
            <person name="Maglott D."/>
            <person name="Birtle Z."/>
            <person name="Marques A.C."/>
            <person name="Graves T."/>
            <person name="Zhou S."/>
            <person name="Teague B."/>
            <person name="Potamousis K."/>
            <person name="Churas C."/>
            <person name="Place M."/>
            <person name="Herschleb J."/>
            <person name="Runnheim R."/>
            <person name="Forrest D."/>
            <person name="Amos-Landgraf J."/>
            <person name="Schwartz D.C."/>
            <person name="Cheng Z."/>
            <person name="Lindblad-Toh K."/>
            <person name="Eichler E.E."/>
            <person name="Ponting C.P."/>
        </authorList>
    </citation>
    <scope>NUCLEOTIDE SEQUENCE [LARGE SCALE GENOMIC DNA]</scope>
    <source>
        <strain>C57BL/6J</strain>
    </source>
</reference>
<reference key="2">
    <citation type="submission" date="2005-07" db="EMBL/GenBank/DDBJ databases">
        <authorList>
            <person name="Mural R.J."/>
            <person name="Adams M.D."/>
            <person name="Myers E.W."/>
            <person name="Smith H.O."/>
            <person name="Venter J.C."/>
        </authorList>
    </citation>
    <scope>NUCLEOTIDE SEQUENCE [LARGE SCALE GENOMIC DNA]</scope>
</reference>
<dbReference type="EMBL" id="AL645470">
    <property type="protein sequence ID" value="CAM23020.1"/>
    <property type="status" value="ALT_SEQ"/>
    <property type="molecule type" value="Genomic_DNA"/>
</dbReference>
<dbReference type="EMBL" id="AL645470">
    <property type="protein sequence ID" value="CAM23021.1"/>
    <property type="status" value="ALT_SEQ"/>
    <property type="molecule type" value="Genomic_DNA"/>
</dbReference>
<dbReference type="EMBL" id="AL645470">
    <property type="protein sequence ID" value="CAM23022.1"/>
    <property type="status" value="ALT_SEQ"/>
    <property type="molecule type" value="Genomic_DNA"/>
</dbReference>
<dbReference type="EMBL" id="CH466558">
    <property type="protein sequence ID" value="EDL34494.1"/>
    <property type="molecule type" value="Genomic_DNA"/>
</dbReference>
<dbReference type="CCDS" id="CCDS36373.1"/>
<dbReference type="RefSeq" id="NP_001074403.1">
    <property type="nucleotide sequence ID" value="NM_001080934.1"/>
</dbReference>
<dbReference type="SMR" id="G5E8K6"/>
<dbReference type="FunCoup" id="G5E8K6">
    <property type="interactions" value="15"/>
</dbReference>
<dbReference type="STRING" id="10090.ENSMUSP00000090102"/>
<dbReference type="PhosphoSitePlus" id="G5E8K6"/>
<dbReference type="PaxDb" id="10090-ENSMUSP00000090102"/>
<dbReference type="ProteomicsDB" id="291387"/>
<dbReference type="Antibodypedia" id="46001">
    <property type="antibodies" value="38 antibodies from 14 providers"/>
</dbReference>
<dbReference type="Ensembl" id="ENSMUST00000092445.12">
    <property type="protein sequence ID" value="ENSMUSP00000090102.6"/>
    <property type="gene ID" value="ENSMUSG00000045775.16"/>
</dbReference>
<dbReference type="GeneID" id="217316"/>
<dbReference type="KEGG" id="mmu:217316"/>
<dbReference type="UCSC" id="uc007mhp.1">
    <property type="organism name" value="mouse"/>
</dbReference>
<dbReference type="AGR" id="MGI:2443515"/>
<dbReference type="CTD" id="9121"/>
<dbReference type="MGI" id="MGI:2443515">
    <property type="gene designation" value="Slc16a5"/>
</dbReference>
<dbReference type="VEuPathDB" id="HostDB:ENSMUSG00000045775"/>
<dbReference type="eggNOG" id="KOG2504">
    <property type="taxonomic scope" value="Eukaryota"/>
</dbReference>
<dbReference type="GeneTree" id="ENSGT00940000159666"/>
<dbReference type="HOGENOM" id="CLU_001265_59_1_1"/>
<dbReference type="InParanoid" id="G5E8K6"/>
<dbReference type="OrthoDB" id="5667at2759"/>
<dbReference type="PhylomeDB" id="G5E8K6"/>
<dbReference type="TreeFam" id="TF313792"/>
<dbReference type="BioGRID-ORCS" id="217316">
    <property type="hits" value="7 hits in 48 CRISPR screens"/>
</dbReference>
<dbReference type="ChiTaRS" id="Slc16a5">
    <property type="organism name" value="mouse"/>
</dbReference>
<dbReference type="PRO" id="PR:G5E8K6"/>
<dbReference type="Proteomes" id="UP000000589">
    <property type="component" value="Chromosome 11"/>
</dbReference>
<dbReference type="RNAct" id="G5E8K6">
    <property type="molecule type" value="protein"/>
</dbReference>
<dbReference type="Bgee" id="ENSMUSG00000045775">
    <property type="expression patterns" value="Expressed in thymus and 57 other cell types or tissues"/>
</dbReference>
<dbReference type="ExpressionAtlas" id="G5E8K6">
    <property type="expression patterns" value="baseline and differential"/>
</dbReference>
<dbReference type="GO" id="GO:0005886">
    <property type="term" value="C:plasma membrane"/>
    <property type="evidence" value="ECO:0007669"/>
    <property type="project" value="UniProtKB-SubCell"/>
</dbReference>
<dbReference type="GO" id="GO:0015293">
    <property type="term" value="F:symporter activity"/>
    <property type="evidence" value="ECO:0007669"/>
    <property type="project" value="UniProtKB-KW"/>
</dbReference>
<dbReference type="FunFam" id="1.20.1250.20:FF:000242">
    <property type="entry name" value="Solute carrier family 16 member 5"/>
    <property type="match status" value="1"/>
</dbReference>
<dbReference type="FunFam" id="1.20.1250.20:FF:000291">
    <property type="entry name" value="Solute carrier family 16 member 5"/>
    <property type="match status" value="1"/>
</dbReference>
<dbReference type="Gene3D" id="1.20.1250.20">
    <property type="entry name" value="MFS general substrate transporter like domains"/>
    <property type="match status" value="2"/>
</dbReference>
<dbReference type="InterPro" id="IPR011701">
    <property type="entry name" value="MFS"/>
</dbReference>
<dbReference type="InterPro" id="IPR020846">
    <property type="entry name" value="MFS_dom"/>
</dbReference>
<dbReference type="InterPro" id="IPR036259">
    <property type="entry name" value="MFS_trans_sf"/>
</dbReference>
<dbReference type="InterPro" id="IPR050327">
    <property type="entry name" value="Proton-linked_MCT"/>
</dbReference>
<dbReference type="PANTHER" id="PTHR11360">
    <property type="entry name" value="MONOCARBOXYLATE TRANSPORTER"/>
    <property type="match status" value="1"/>
</dbReference>
<dbReference type="PANTHER" id="PTHR11360:SF21">
    <property type="entry name" value="MONOCARBOXYLATE TRANSPORTER 6"/>
    <property type="match status" value="1"/>
</dbReference>
<dbReference type="Pfam" id="PF07690">
    <property type="entry name" value="MFS_1"/>
    <property type="match status" value="2"/>
</dbReference>
<dbReference type="SUPFAM" id="SSF103473">
    <property type="entry name" value="MFS general substrate transporter"/>
    <property type="match status" value="1"/>
</dbReference>
<dbReference type="PROSITE" id="PS50850">
    <property type="entry name" value="MFS"/>
    <property type="match status" value="1"/>
</dbReference>
<organism>
    <name type="scientific">Mus musculus</name>
    <name type="common">Mouse</name>
    <dbReference type="NCBI Taxonomy" id="10090"/>
    <lineage>
        <taxon>Eukaryota</taxon>
        <taxon>Metazoa</taxon>
        <taxon>Chordata</taxon>
        <taxon>Craniata</taxon>
        <taxon>Vertebrata</taxon>
        <taxon>Euteleostomi</taxon>
        <taxon>Mammalia</taxon>
        <taxon>Eutheria</taxon>
        <taxon>Euarchontoglires</taxon>
        <taxon>Glires</taxon>
        <taxon>Rodentia</taxon>
        <taxon>Myomorpha</taxon>
        <taxon>Muroidea</taxon>
        <taxon>Muridae</taxon>
        <taxon>Murinae</taxon>
        <taxon>Mus</taxon>
        <taxon>Mus</taxon>
    </lineage>
</organism>
<accession>G5E8K6</accession>
<accession>A2A9X8</accession>
<accession>A2A9X9</accession>
<accession>A2A9Y0</accession>
<gene>
    <name type="primary">Slc16a5</name>
    <name type="synonym">Mct5</name>
    <name type="synonym">Mct6</name>
</gene>